<gene>
    <name type="ordered locus">Bphy_1374</name>
</gene>
<protein>
    <recommendedName>
        <fullName>Putative 4-hydroxy-4-methyl-2-oxoglutarate aldolase</fullName>
        <shortName>HMG aldolase</shortName>
        <ecNumber>4.1.3.17</ecNumber>
    </recommendedName>
    <alternativeName>
        <fullName>Oxaloacetate decarboxylase</fullName>
        <shortName>OAA decarboxylase</shortName>
        <ecNumber>4.1.1.112</ecNumber>
    </alternativeName>
    <alternativeName>
        <fullName>Regulator of ribonuclease activity homolog</fullName>
    </alternativeName>
    <alternativeName>
        <fullName>RraA-like protein</fullName>
    </alternativeName>
</protein>
<comment type="function">
    <text evidence="1">Catalyzes the aldol cleavage of 4-hydroxy-4-methyl-2-oxoglutarate (HMG) into 2 molecules of pyruvate. Also contains a secondary oxaloacetate (OAA) decarboxylase activity due to the common pyruvate enolate transition state formed following C-C bond cleavage in the retro-aldol and decarboxylation reactions (By similarity).</text>
</comment>
<comment type="catalytic activity">
    <reaction>
        <text>4-hydroxy-4-methyl-2-oxoglutarate = 2 pyruvate</text>
        <dbReference type="Rhea" id="RHEA:22748"/>
        <dbReference type="ChEBI" id="CHEBI:15361"/>
        <dbReference type="ChEBI" id="CHEBI:58276"/>
        <dbReference type="EC" id="4.1.3.17"/>
    </reaction>
</comment>
<comment type="catalytic activity">
    <reaction>
        <text>oxaloacetate + H(+) = pyruvate + CO2</text>
        <dbReference type="Rhea" id="RHEA:15641"/>
        <dbReference type="ChEBI" id="CHEBI:15361"/>
        <dbReference type="ChEBI" id="CHEBI:15378"/>
        <dbReference type="ChEBI" id="CHEBI:16452"/>
        <dbReference type="ChEBI" id="CHEBI:16526"/>
        <dbReference type="EC" id="4.1.1.112"/>
    </reaction>
</comment>
<comment type="cofactor">
    <cofactor evidence="1">
        <name>a divalent metal cation</name>
        <dbReference type="ChEBI" id="CHEBI:60240"/>
    </cofactor>
    <text evidence="1">Divalent metal cation.</text>
</comment>
<comment type="subunit">
    <text evidence="1">Homotrimer.</text>
</comment>
<comment type="similarity">
    <text evidence="2">Belongs to the class II aldolase/RraA-like family.</text>
</comment>
<proteinExistence type="inferred from homology"/>
<keyword id="KW-0456">Lyase</keyword>
<keyword id="KW-0479">Metal-binding</keyword>
<keyword id="KW-1185">Reference proteome</keyword>
<feature type="chain" id="PRO_1000125595" description="Putative 4-hydroxy-4-methyl-2-oxoglutarate aldolase">
    <location>
        <begin position="1"/>
        <end position="164"/>
    </location>
</feature>
<feature type="binding site" evidence="1">
    <location>
        <begin position="80"/>
        <end position="83"/>
    </location>
    <ligand>
        <name>substrate</name>
    </ligand>
</feature>
<feature type="binding site" evidence="1">
    <location>
        <position position="102"/>
    </location>
    <ligand>
        <name>substrate</name>
    </ligand>
</feature>
<feature type="binding site" evidence="1">
    <location>
        <position position="103"/>
    </location>
    <ligand>
        <name>a divalent metal cation</name>
        <dbReference type="ChEBI" id="CHEBI:60240"/>
    </ligand>
</feature>
<accession>B2JIG2</accession>
<evidence type="ECO:0000250" key="1"/>
<evidence type="ECO:0000305" key="2"/>
<organism>
    <name type="scientific">Paraburkholderia phymatum (strain DSM 17167 / CIP 108236 / LMG 21445 / STM815)</name>
    <name type="common">Burkholderia phymatum</name>
    <dbReference type="NCBI Taxonomy" id="391038"/>
    <lineage>
        <taxon>Bacteria</taxon>
        <taxon>Pseudomonadati</taxon>
        <taxon>Pseudomonadota</taxon>
        <taxon>Betaproteobacteria</taxon>
        <taxon>Burkholderiales</taxon>
        <taxon>Burkholderiaceae</taxon>
        <taxon>Paraburkholderia</taxon>
    </lineage>
</organism>
<sequence>MNFATADLCDAHEDQLTAGTLRVLDPVFSRFGRASRFGGEAVTLKVFEDNTLVRATLEEKGVARVLVVDGGGSLRCALVGGNLGKLGEKNGWAGIVVFGCVRDTLELNECNLGIIALATHPQRSQKRGGGERDVSLRLPGSVVRPGEWIYADSDGVLVSSAPLV</sequence>
<reference key="1">
    <citation type="journal article" date="2014" name="Stand. Genomic Sci.">
        <title>Complete genome sequence of Burkholderia phymatum STM815(T), a broad host range and efficient nitrogen-fixing symbiont of Mimosa species.</title>
        <authorList>
            <person name="Moulin L."/>
            <person name="Klonowska A."/>
            <person name="Caroline B."/>
            <person name="Booth K."/>
            <person name="Vriezen J.A."/>
            <person name="Melkonian R."/>
            <person name="James E.K."/>
            <person name="Young J.P."/>
            <person name="Bena G."/>
            <person name="Hauser L."/>
            <person name="Land M."/>
            <person name="Kyrpides N."/>
            <person name="Bruce D."/>
            <person name="Chain P."/>
            <person name="Copeland A."/>
            <person name="Pitluck S."/>
            <person name="Woyke T."/>
            <person name="Lizotte-Waniewski M."/>
            <person name="Bristow J."/>
            <person name="Riley M."/>
        </authorList>
    </citation>
    <scope>NUCLEOTIDE SEQUENCE [LARGE SCALE GENOMIC DNA]</scope>
    <source>
        <strain>DSM 17167 / CIP 108236 / LMG 21445 / STM815</strain>
    </source>
</reference>
<dbReference type="EC" id="4.1.3.17"/>
<dbReference type="EC" id="4.1.1.112"/>
<dbReference type="EMBL" id="CP001043">
    <property type="protein sequence ID" value="ACC70556.1"/>
    <property type="molecule type" value="Genomic_DNA"/>
</dbReference>
<dbReference type="RefSeq" id="WP_012400770.1">
    <property type="nucleotide sequence ID" value="NC_010622.1"/>
</dbReference>
<dbReference type="SMR" id="B2JIG2"/>
<dbReference type="STRING" id="391038.Bphy_1374"/>
<dbReference type="KEGG" id="bph:Bphy_1374"/>
<dbReference type="eggNOG" id="COG0684">
    <property type="taxonomic scope" value="Bacteria"/>
</dbReference>
<dbReference type="HOGENOM" id="CLU_072626_4_0_4"/>
<dbReference type="OrthoDB" id="943692at2"/>
<dbReference type="Proteomes" id="UP000001192">
    <property type="component" value="Chromosome 1"/>
</dbReference>
<dbReference type="GO" id="GO:0047443">
    <property type="term" value="F:4-hydroxy-4-methyl-2-oxoglutarate aldolase activity"/>
    <property type="evidence" value="ECO:0007669"/>
    <property type="project" value="UniProtKB-EC"/>
</dbReference>
<dbReference type="GO" id="GO:0046872">
    <property type="term" value="F:metal ion binding"/>
    <property type="evidence" value="ECO:0007669"/>
    <property type="project" value="UniProtKB-KW"/>
</dbReference>
<dbReference type="GO" id="GO:0008948">
    <property type="term" value="F:oxaloacetate decarboxylase activity"/>
    <property type="evidence" value="ECO:0007669"/>
    <property type="project" value="UniProtKB-EC"/>
</dbReference>
<dbReference type="GO" id="GO:0008428">
    <property type="term" value="F:ribonuclease inhibitor activity"/>
    <property type="evidence" value="ECO:0007669"/>
    <property type="project" value="InterPro"/>
</dbReference>
<dbReference type="GO" id="GO:0051252">
    <property type="term" value="P:regulation of RNA metabolic process"/>
    <property type="evidence" value="ECO:0007669"/>
    <property type="project" value="InterPro"/>
</dbReference>
<dbReference type="CDD" id="cd16841">
    <property type="entry name" value="RraA_family"/>
    <property type="match status" value="1"/>
</dbReference>
<dbReference type="Gene3D" id="3.50.30.40">
    <property type="entry name" value="Ribonuclease E inhibitor RraA/RraA-like"/>
    <property type="match status" value="1"/>
</dbReference>
<dbReference type="InterPro" id="IPR010203">
    <property type="entry name" value="RraA"/>
</dbReference>
<dbReference type="InterPro" id="IPR005493">
    <property type="entry name" value="RraA/RraA-like"/>
</dbReference>
<dbReference type="InterPro" id="IPR036704">
    <property type="entry name" value="RraA/RraA-like_sf"/>
</dbReference>
<dbReference type="NCBIfam" id="TIGR01935">
    <property type="entry name" value="NOT-MenG"/>
    <property type="match status" value="1"/>
</dbReference>
<dbReference type="NCBIfam" id="NF006875">
    <property type="entry name" value="PRK09372.1"/>
    <property type="match status" value="1"/>
</dbReference>
<dbReference type="PANTHER" id="PTHR33254">
    <property type="entry name" value="4-HYDROXY-4-METHYL-2-OXOGLUTARATE ALDOLASE 3-RELATED"/>
    <property type="match status" value="1"/>
</dbReference>
<dbReference type="PANTHER" id="PTHR33254:SF4">
    <property type="entry name" value="4-HYDROXY-4-METHYL-2-OXOGLUTARATE ALDOLASE 3-RELATED"/>
    <property type="match status" value="1"/>
</dbReference>
<dbReference type="Pfam" id="PF03737">
    <property type="entry name" value="RraA-like"/>
    <property type="match status" value="1"/>
</dbReference>
<dbReference type="SUPFAM" id="SSF89562">
    <property type="entry name" value="RraA-like"/>
    <property type="match status" value="1"/>
</dbReference>
<name>RRAAH_PARP8</name>